<protein>
    <recommendedName>
        <fullName evidence="1">L-alanine exporter AlaE</fullName>
    </recommendedName>
</protein>
<accession>P64550</accession>
<accession>P76626</accession>
<accession>Q2MAC5</accession>
<name>ALAE_ECOLI</name>
<feature type="chain" id="PRO_0000169302" description="L-alanine exporter AlaE">
    <location>
        <begin position="1"/>
        <end position="149"/>
    </location>
</feature>
<feature type="transmembrane region" description="Helical" evidence="1">
    <location>
        <begin position="16"/>
        <end position="36"/>
    </location>
</feature>
<feature type="transmembrane region" description="Helical" evidence="1">
    <location>
        <begin position="46"/>
        <end position="66"/>
    </location>
</feature>
<feature type="transmembrane region" description="Helical" evidence="1">
    <location>
        <begin position="85"/>
        <end position="105"/>
    </location>
</feature>
<feature type="transmembrane region" description="Helical" evidence="1">
    <location>
        <begin position="112"/>
        <end position="132"/>
    </location>
</feature>
<comment type="function">
    <text evidence="1 2">Exports L-alanine.</text>
</comment>
<comment type="subcellular location">
    <subcellularLocation>
        <location evidence="1 2">Cell inner membrane</location>
        <topology evidence="1 2">Multi-pass membrane protein</topology>
    </subcellularLocation>
</comment>
<comment type="induction">
    <text evidence="2">Induced in the presence of L-alanyl-L-alanine dipeptides.</text>
</comment>
<comment type="disruption phenotype">
    <text evidence="2">Mutants show a significant accumulation of intracellular L-alanine and a reduction in the L-alanine export rate.</text>
</comment>
<comment type="similarity">
    <text evidence="1">Belongs to the AlaE exporter family.</text>
</comment>
<gene>
    <name evidence="1" type="primary">alaE</name>
    <name type="synonym">ygaW</name>
    <name type="ordered locus">b2670</name>
    <name type="ordered locus">JW2645</name>
</gene>
<proteinExistence type="evidence at protein level"/>
<reference key="1">
    <citation type="journal article" date="1997" name="Science">
        <title>The complete genome sequence of Escherichia coli K-12.</title>
        <authorList>
            <person name="Blattner F.R."/>
            <person name="Plunkett G. III"/>
            <person name="Bloch C.A."/>
            <person name="Perna N.T."/>
            <person name="Burland V."/>
            <person name="Riley M."/>
            <person name="Collado-Vides J."/>
            <person name="Glasner J.D."/>
            <person name="Rode C.K."/>
            <person name="Mayhew G.F."/>
            <person name="Gregor J."/>
            <person name="Davis N.W."/>
            <person name="Kirkpatrick H.A."/>
            <person name="Goeden M.A."/>
            <person name="Rose D.J."/>
            <person name="Mau B."/>
            <person name="Shao Y."/>
        </authorList>
    </citation>
    <scope>NUCLEOTIDE SEQUENCE [LARGE SCALE GENOMIC DNA]</scope>
    <source>
        <strain>K12 / MG1655 / ATCC 47076</strain>
    </source>
</reference>
<reference key="2">
    <citation type="journal article" date="2006" name="Mol. Syst. Biol.">
        <title>Highly accurate genome sequences of Escherichia coli K-12 strains MG1655 and W3110.</title>
        <authorList>
            <person name="Hayashi K."/>
            <person name="Morooka N."/>
            <person name="Yamamoto Y."/>
            <person name="Fujita K."/>
            <person name="Isono K."/>
            <person name="Choi S."/>
            <person name="Ohtsubo E."/>
            <person name="Baba T."/>
            <person name="Wanner B.L."/>
            <person name="Mori H."/>
            <person name="Horiuchi T."/>
        </authorList>
    </citation>
    <scope>NUCLEOTIDE SEQUENCE [LARGE SCALE GENOMIC DNA]</scope>
    <source>
        <strain>K12 / W3110 / ATCC 27325 / DSM 5911</strain>
    </source>
</reference>
<reference key="3">
    <citation type="journal article" date="2011" name="Appl. Environ. Microbiol.">
        <title>Inducible L-alanine exporter encoded by the novel gene ygaW (alaE) in Escherichia coli.</title>
        <authorList>
            <person name="Hori H."/>
            <person name="Yoneyama H."/>
            <person name="Tobe R."/>
            <person name="Ando T."/>
            <person name="Isogai E."/>
            <person name="Katsumata R."/>
        </authorList>
    </citation>
    <scope>FUNCTION IN ALANINE EXPORT</scope>
    <scope>SUBCELLULAR LOCATION</scope>
    <scope>INDUCTION</scope>
    <scope>DISRUPTION PHENOTYPE</scope>
    <scope>GENE NAME</scope>
    <source>
        <strain>K12</strain>
    </source>
</reference>
<organism>
    <name type="scientific">Escherichia coli (strain K12)</name>
    <dbReference type="NCBI Taxonomy" id="83333"/>
    <lineage>
        <taxon>Bacteria</taxon>
        <taxon>Pseudomonadati</taxon>
        <taxon>Pseudomonadota</taxon>
        <taxon>Gammaproteobacteria</taxon>
        <taxon>Enterobacterales</taxon>
        <taxon>Enterobacteriaceae</taxon>
        <taxon>Escherichia</taxon>
    </lineage>
</organism>
<evidence type="ECO:0000255" key="1">
    <source>
        <dbReference type="HAMAP-Rule" id="MF_00914"/>
    </source>
</evidence>
<evidence type="ECO:0000269" key="2">
    <source>
    </source>
</evidence>
<dbReference type="EMBL" id="U00096">
    <property type="protein sequence ID" value="AAC75717.1"/>
    <property type="molecule type" value="Genomic_DNA"/>
</dbReference>
<dbReference type="EMBL" id="AP009048">
    <property type="protein sequence ID" value="BAE76781.1"/>
    <property type="molecule type" value="Genomic_DNA"/>
</dbReference>
<dbReference type="PIR" id="G65046">
    <property type="entry name" value="G65046"/>
</dbReference>
<dbReference type="RefSeq" id="NP_417156.1">
    <property type="nucleotide sequence ID" value="NC_000913.3"/>
</dbReference>
<dbReference type="RefSeq" id="WP_000492656.1">
    <property type="nucleotide sequence ID" value="NZ_STEB01000042.1"/>
</dbReference>
<dbReference type="BioGRID" id="4261134">
    <property type="interactions" value="9"/>
</dbReference>
<dbReference type="FunCoup" id="P64550">
    <property type="interactions" value="45"/>
</dbReference>
<dbReference type="STRING" id="511145.b2670"/>
<dbReference type="PaxDb" id="511145-b2670"/>
<dbReference type="EnsemblBacteria" id="AAC75717">
    <property type="protein sequence ID" value="AAC75717"/>
    <property type="gene ID" value="b2670"/>
</dbReference>
<dbReference type="GeneID" id="75205913"/>
<dbReference type="GeneID" id="947147"/>
<dbReference type="KEGG" id="ecj:JW2645"/>
<dbReference type="KEGG" id="eco:b2670"/>
<dbReference type="KEGG" id="ecoc:C3026_14715"/>
<dbReference type="PATRIC" id="fig|1411691.4.peg.4071"/>
<dbReference type="EchoBASE" id="EB3297"/>
<dbReference type="eggNOG" id="ENOG502ZRFS">
    <property type="taxonomic scope" value="Bacteria"/>
</dbReference>
<dbReference type="HOGENOM" id="CLU_126493_0_0_6"/>
<dbReference type="InParanoid" id="P64550"/>
<dbReference type="OMA" id="ADWHQIA"/>
<dbReference type="OrthoDB" id="9006207at2"/>
<dbReference type="PhylomeDB" id="P64550"/>
<dbReference type="BioCyc" id="EcoCyc:G7399-MONOMER"/>
<dbReference type="BioCyc" id="MetaCyc:G7399-MONOMER"/>
<dbReference type="PRO" id="PR:P64550"/>
<dbReference type="Proteomes" id="UP000000625">
    <property type="component" value="Chromosome"/>
</dbReference>
<dbReference type="GO" id="GO:0005886">
    <property type="term" value="C:plasma membrane"/>
    <property type="evidence" value="ECO:0000314"/>
    <property type="project" value="EcoCyc"/>
</dbReference>
<dbReference type="GO" id="GO:0034639">
    <property type="term" value="F:L-amino acid efflux transmembrane transporter activity"/>
    <property type="evidence" value="ECO:0000314"/>
    <property type="project" value="EcoCyc"/>
</dbReference>
<dbReference type="GO" id="GO:0032973">
    <property type="term" value="P:amino acid export across plasma membrane"/>
    <property type="evidence" value="ECO:0000269"/>
    <property type="project" value="EcoCyc"/>
</dbReference>
<dbReference type="GO" id="GO:0033554">
    <property type="term" value="P:cellular response to stress"/>
    <property type="evidence" value="ECO:0000270"/>
    <property type="project" value="EcoCyc"/>
</dbReference>
<dbReference type="GO" id="GO:0015808">
    <property type="term" value="P:L-alanine transport"/>
    <property type="evidence" value="ECO:0000314"/>
    <property type="project" value="EcoCyc"/>
</dbReference>
<dbReference type="HAMAP" id="MF_00914">
    <property type="entry name" value="L_Ala_exporter"/>
    <property type="match status" value="1"/>
</dbReference>
<dbReference type="InterPro" id="IPR010574">
    <property type="entry name" value="Ala_export_AlaE"/>
</dbReference>
<dbReference type="Pfam" id="PF06610">
    <property type="entry name" value="AlaE"/>
    <property type="match status" value="1"/>
</dbReference>
<sequence length="149" mass="16949">MFSPQSRLRHAVADTFAMVVYCSVVNMCIEVFLSGMSFEQSFYSRLVAIPVNILIAWPYGMYRDLFMRAARKVSPSGWIKNLADILAYVTFQSPVYVAILLVVGADWHQIMAAVSSNIVVSMLMGAVYGYFLDYCRRLFKVSRYQQVKA</sequence>
<keyword id="KW-0029">Amino-acid transport</keyword>
<keyword id="KW-0997">Cell inner membrane</keyword>
<keyword id="KW-1003">Cell membrane</keyword>
<keyword id="KW-0472">Membrane</keyword>
<keyword id="KW-1185">Reference proteome</keyword>
<keyword id="KW-0812">Transmembrane</keyword>
<keyword id="KW-1133">Transmembrane helix</keyword>
<keyword id="KW-0813">Transport</keyword>